<feature type="chain" id="PRO_0000083198" description="Capsid protein">
    <location>
        <begin position="1"/>
        <end position="218"/>
    </location>
</feature>
<feature type="region of interest" description="Disordered" evidence="2">
    <location>
        <begin position="1"/>
        <end position="29"/>
    </location>
</feature>
<feature type="compositionally biased region" description="Basic residues" evidence="2">
    <location>
        <begin position="11"/>
        <end position="21"/>
    </location>
</feature>
<feature type="modified residue" description="N-acetylmethionine; by host" evidence="3">
    <location>
        <position position="1"/>
    </location>
</feature>
<evidence type="ECO:0000250" key="1"/>
<evidence type="ECO:0000256" key="2">
    <source>
        <dbReference type="SAM" id="MobiDB-lite"/>
    </source>
</evidence>
<evidence type="ECO:0000269" key="3">
    <source>
    </source>
</evidence>
<evidence type="ECO:0000305" key="4"/>
<name>CAPSD_CMVC</name>
<sequence>MDKSESTSAGRNHRRRPRRGSRSAPSSADANFRVLSQQLSRLNKTLAAGRPTINHPTFVGSERCRPGYTFTSITLKPPKIDRESYYGKRLLLPDSVTEYDKKLVSRIQIRVNPLPKFDSTVWVTVRKVPASSDLSVAAISAMFADGASPVLVYQYAASGVQANNKLLFDLSAMRADIGDMRKYAVLVYSKDDALETDELVLHVDIEHQRIPTSGVLPV</sequence>
<proteinExistence type="evidence at protein level"/>
<gene>
    <name type="ORF">ORF3b</name>
</gene>
<organism>
    <name type="scientific">Cucumber mosaic virus (strain C)</name>
    <name type="common">CMV</name>
    <dbReference type="NCBI Taxonomy" id="12306"/>
    <lineage>
        <taxon>Viruses</taxon>
        <taxon>Riboviria</taxon>
        <taxon>Orthornavirae</taxon>
        <taxon>Kitrinoviricota</taxon>
        <taxon>Alsuviricetes</taxon>
        <taxon>Martellivirales</taxon>
        <taxon>Bromoviridae</taxon>
        <taxon>Cucumovirus</taxon>
        <taxon>Cucumber mosaic virus</taxon>
    </lineage>
</organism>
<reference key="1">
    <citation type="journal article" date="1989" name="J. Gen. Virol.">
        <title>Nucleotide sequences of the coat protein genes and flanking regions of cucumber mosaic virus strains C and WL RNA 3.</title>
        <authorList>
            <person name="Quemada H."/>
            <person name="Kearney C."/>
            <person name="Gonsalves D."/>
            <person name="Slightom J.L."/>
        </authorList>
    </citation>
    <scope>NUCLEOTIDE SEQUENCE [GENOMIC RNA]</scope>
</reference>
<reference key="2">
    <citation type="journal article" date="1982" name="J. Biochem.">
        <title>Micro-identification of amino-terminal acetylamino acids in proteins.</title>
        <authorList>
            <person name="Tsunasawa S."/>
            <person name="Narita K."/>
        </authorList>
    </citation>
    <scope>ACETYLATION AT MET-1</scope>
</reference>
<accession>P21368</accession>
<comment type="function">
    <text evidence="1">Capsid protein. Probably binds RNA and plays a role in packaging (By similarity).</text>
</comment>
<comment type="subcellular location">
    <subcellularLocation>
        <location evidence="4">Virion</location>
    </subcellularLocation>
</comment>
<comment type="domain">
    <text evidence="1">The N-terminal arginine-rich stretch does not seem to be the major RNA-binding region that allows formation of an infectious ribonucleoprotein complex.</text>
</comment>
<comment type="similarity">
    <text evidence="4">Belongs to the cucumovirus capsid protein family.</text>
</comment>
<protein>
    <recommendedName>
        <fullName>Capsid protein</fullName>
        <shortName>CP</shortName>
    </recommendedName>
    <alternativeName>
        <fullName>Coat protein</fullName>
    </alternativeName>
</protein>
<keyword id="KW-0007">Acetylation</keyword>
<keyword id="KW-0167">Capsid protein</keyword>
<keyword id="KW-0687">Ribonucleoprotein</keyword>
<keyword id="KW-0694">RNA-binding</keyword>
<keyword id="KW-1142">T=3 icosahedral capsid protein</keyword>
<keyword id="KW-0543">Viral nucleoprotein</keyword>
<keyword id="KW-0946">Virion</keyword>
<organismHost>
    <name type="scientific">Cucumis sativus</name>
    <name type="common">Cucumber</name>
    <dbReference type="NCBI Taxonomy" id="3659"/>
</organismHost>
<organismHost>
    <name type="scientific">Solanum lycopersicum</name>
    <name type="common">Tomato</name>
    <name type="synonym">Lycopersicon esculentum</name>
    <dbReference type="NCBI Taxonomy" id="4081"/>
</organismHost>
<organismHost>
    <name type="scientific">Spinacia oleracea</name>
    <name type="common">Spinach</name>
    <dbReference type="NCBI Taxonomy" id="3562"/>
</organismHost>
<dbReference type="EMBL" id="D00462">
    <property type="protein sequence ID" value="BAA00357.1"/>
    <property type="molecule type" value="Genomic_RNA"/>
</dbReference>
<dbReference type="PIR" id="JA0136">
    <property type="entry name" value="JA0136"/>
</dbReference>
<dbReference type="SMR" id="P21368"/>
<dbReference type="iPTMnet" id="P21368"/>
<dbReference type="GO" id="GO:1990904">
    <property type="term" value="C:ribonucleoprotein complex"/>
    <property type="evidence" value="ECO:0007669"/>
    <property type="project" value="UniProtKB-KW"/>
</dbReference>
<dbReference type="GO" id="GO:0039617">
    <property type="term" value="C:T=3 icosahedral viral capsid"/>
    <property type="evidence" value="ECO:0007669"/>
    <property type="project" value="UniProtKB-KW"/>
</dbReference>
<dbReference type="GO" id="GO:0019013">
    <property type="term" value="C:viral nucleocapsid"/>
    <property type="evidence" value="ECO:0007669"/>
    <property type="project" value="UniProtKB-KW"/>
</dbReference>
<dbReference type="GO" id="GO:0003723">
    <property type="term" value="F:RNA binding"/>
    <property type="evidence" value="ECO:0007669"/>
    <property type="project" value="UniProtKB-KW"/>
</dbReference>
<dbReference type="GO" id="GO:0005198">
    <property type="term" value="F:structural molecule activity"/>
    <property type="evidence" value="ECO:0007669"/>
    <property type="project" value="InterPro"/>
</dbReference>
<dbReference type="Gene3D" id="2.60.120.530">
    <property type="entry name" value="Cucumovirus coat protein, subunit A"/>
    <property type="match status" value="1"/>
</dbReference>
<dbReference type="InterPro" id="IPR000247">
    <property type="entry name" value="Cucumovirus_coat"/>
</dbReference>
<dbReference type="InterPro" id="IPR037137">
    <property type="entry name" value="Cucumovirus_coat_Asu_sf"/>
</dbReference>
<dbReference type="Pfam" id="PF00760">
    <property type="entry name" value="Cucumo_coat"/>
    <property type="match status" value="1"/>
</dbReference>
<dbReference type="PRINTS" id="PR00222">
    <property type="entry name" value="CUCUMOCOAT"/>
</dbReference>
<dbReference type="SUPFAM" id="SSF88633">
    <property type="entry name" value="Positive stranded ssRNA viruses"/>
    <property type="match status" value="1"/>
</dbReference>